<protein>
    <recommendedName>
        <fullName evidence="1">RNA-binding protein Hfq</fullName>
    </recommendedName>
</protein>
<evidence type="ECO:0000255" key="1">
    <source>
        <dbReference type="HAMAP-Rule" id="MF_00436"/>
    </source>
</evidence>
<evidence type="ECO:0000255" key="2">
    <source>
        <dbReference type="PROSITE-ProRule" id="PRU01346"/>
    </source>
</evidence>
<gene>
    <name evidence="1" type="primary">hfq</name>
    <name type="ordered locus">GK1313</name>
</gene>
<feature type="chain" id="PRO_0000095640" description="RNA-binding protein Hfq">
    <location>
        <begin position="1"/>
        <end position="75"/>
    </location>
</feature>
<feature type="domain" description="Sm" evidence="2">
    <location>
        <begin position="9"/>
        <end position="69"/>
    </location>
</feature>
<dbReference type="EMBL" id="BA000043">
    <property type="protein sequence ID" value="BAD75598.1"/>
    <property type="molecule type" value="Genomic_DNA"/>
</dbReference>
<dbReference type="RefSeq" id="WP_011230812.1">
    <property type="nucleotide sequence ID" value="NC_006510.1"/>
</dbReference>
<dbReference type="SMR" id="Q5L0D8"/>
<dbReference type="STRING" id="235909.GK1313"/>
<dbReference type="GeneID" id="89611480"/>
<dbReference type="KEGG" id="gka:GK1313"/>
<dbReference type="eggNOG" id="COG1923">
    <property type="taxonomic scope" value="Bacteria"/>
</dbReference>
<dbReference type="HOGENOM" id="CLU_113688_3_0_9"/>
<dbReference type="Proteomes" id="UP000001172">
    <property type="component" value="Chromosome"/>
</dbReference>
<dbReference type="GO" id="GO:0005829">
    <property type="term" value="C:cytosol"/>
    <property type="evidence" value="ECO:0007669"/>
    <property type="project" value="TreeGrafter"/>
</dbReference>
<dbReference type="GO" id="GO:0003723">
    <property type="term" value="F:RNA binding"/>
    <property type="evidence" value="ECO:0007669"/>
    <property type="project" value="UniProtKB-UniRule"/>
</dbReference>
<dbReference type="GO" id="GO:0006355">
    <property type="term" value="P:regulation of DNA-templated transcription"/>
    <property type="evidence" value="ECO:0007669"/>
    <property type="project" value="InterPro"/>
</dbReference>
<dbReference type="GO" id="GO:0043487">
    <property type="term" value="P:regulation of RNA stability"/>
    <property type="evidence" value="ECO:0007669"/>
    <property type="project" value="TreeGrafter"/>
</dbReference>
<dbReference type="GO" id="GO:0045974">
    <property type="term" value="P:regulation of translation, ncRNA-mediated"/>
    <property type="evidence" value="ECO:0007669"/>
    <property type="project" value="TreeGrafter"/>
</dbReference>
<dbReference type="CDD" id="cd01716">
    <property type="entry name" value="Hfq"/>
    <property type="match status" value="1"/>
</dbReference>
<dbReference type="FunFam" id="2.30.30.100:FF:000012">
    <property type="entry name" value="RNA-binding protein Hfq"/>
    <property type="match status" value="1"/>
</dbReference>
<dbReference type="Gene3D" id="2.30.30.100">
    <property type="match status" value="1"/>
</dbReference>
<dbReference type="HAMAP" id="MF_00436">
    <property type="entry name" value="Hfq"/>
    <property type="match status" value="1"/>
</dbReference>
<dbReference type="InterPro" id="IPR005001">
    <property type="entry name" value="Hfq"/>
</dbReference>
<dbReference type="InterPro" id="IPR010920">
    <property type="entry name" value="LSM_dom_sf"/>
</dbReference>
<dbReference type="InterPro" id="IPR047575">
    <property type="entry name" value="Sm"/>
</dbReference>
<dbReference type="NCBIfam" id="TIGR02383">
    <property type="entry name" value="Hfq"/>
    <property type="match status" value="1"/>
</dbReference>
<dbReference type="NCBIfam" id="NF001602">
    <property type="entry name" value="PRK00395.1"/>
    <property type="match status" value="1"/>
</dbReference>
<dbReference type="PANTHER" id="PTHR34772">
    <property type="entry name" value="RNA-BINDING PROTEIN HFQ"/>
    <property type="match status" value="1"/>
</dbReference>
<dbReference type="PANTHER" id="PTHR34772:SF1">
    <property type="entry name" value="RNA-BINDING PROTEIN HFQ"/>
    <property type="match status" value="1"/>
</dbReference>
<dbReference type="Pfam" id="PF17209">
    <property type="entry name" value="Hfq"/>
    <property type="match status" value="1"/>
</dbReference>
<dbReference type="SUPFAM" id="SSF50182">
    <property type="entry name" value="Sm-like ribonucleoproteins"/>
    <property type="match status" value="1"/>
</dbReference>
<dbReference type="PROSITE" id="PS52002">
    <property type="entry name" value="SM"/>
    <property type="match status" value="1"/>
</dbReference>
<organism>
    <name type="scientific">Geobacillus kaustophilus (strain HTA426)</name>
    <dbReference type="NCBI Taxonomy" id="235909"/>
    <lineage>
        <taxon>Bacteria</taxon>
        <taxon>Bacillati</taxon>
        <taxon>Bacillota</taxon>
        <taxon>Bacilli</taxon>
        <taxon>Bacillales</taxon>
        <taxon>Anoxybacillaceae</taxon>
        <taxon>Geobacillus</taxon>
        <taxon>Geobacillus thermoleovorans group</taxon>
    </lineage>
</organism>
<accession>Q5L0D8</accession>
<reference key="1">
    <citation type="journal article" date="2004" name="Nucleic Acids Res.">
        <title>Thermoadaptation trait revealed by the genome sequence of thermophilic Geobacillus kaustophilus.</title>
        <authorList>
            <person name="Takami H."/>
            <person name="Takaki Y."/>
            <person name="Chee G.-J."/>
            <person name="Nishi S."/>
            <person name="Shimamura S."/>
            <person name="Suzuki H."/>
            <person name="Matsui S."/>
            <person name="Uchiyama I."/>
        </authorList>
    </citation>
    <scope>NUCLEOTIDE SEQUENCE [LARGE SCALE GENOMIC DNA]</scope>
    <source>
        <strain>HTA426</strain>
    </source>
</reference>
<keyword id="KW-1185">Reference proteome</keyword>
<keyword id="KW-0694">RNA-binding</keyword>
<keyword id="KW-0346">Stress response</keyword>
<name>HFQ_GEOKA</name>
<sequence>MKNTINIQDQFLNQLRKEGIQVTVFLLNGFQLRGYIKGFDNFTVLLEVQGKQQLIYKHAISTFAPERNIHFETEQ</sequence>
<comment type="function">
    <text evidence="1">RNA chaperone that binds small regulatory RNA (sRNAs) and mRNAs to facilitate mRNA translational regulation in response to envelope stress, environmental stress and changes in metabolite concentrations. Also binds with high specificity to tRNAs.</text>
</comment>
<comment type="subunit">
    <text evidence="1">Homohexamer.</text>
</comment>
<comment type="similarity">
    <text evidence="1">Belongs to the Hfq family.</text>
</comment>
<proteinExistence type="inferred from homology"/>